<protein>
    <recommendedName>
        <fullName evidence="1">6,7-dimethyl-8-ribityllumazine synthase</fullName>
        <shortName evidence="1">DMRL synthase</shortName>
        <shortName evidence="1">LS</shortName>
        <shortName evidence="1">Lumazine synthase</shortName>
        <ecNumber evidence="1">2.5.1.78</ecNumber>
    </recommendedName>
</protein>
<sequence>MGKEFSGVLNGQGLKIALVVSRFNEFITSKLLSGAKDSLERHGVSADNTDVAWVPGAFEIPLVAQKLAKSGRYDAVVCLGAVIRGSTPHFEYVSSEVSKGIARVGLDAGLPVIFGVITADSIEQAIERAGTKMGNKGFDAATQAIEVANLMKNLT</sequence>
<keyword id="KW-0686">Riboflavin biosynthesis</keyword>
<keyword id="KW-0808">Transferase</keyword>
<accession>A5FQE3</accession>
<gene>
    <name evidence="1" type="primary">ribH</name>
    <name type="ordered locus">DehaBAV1_0998</name>
</gene>
<comment type="function">
    <text evidence="1">Catalyzes the formation of 6,7-dimethyl-8-ribityllumazine by condensation of 5-amino-6-(D-ribitylamino)uracil with 3,4-dihydroxy-2-butanone 4-phosphate. This is the penultimate step in the biosynthesis of riboflavin.</text>
</comment>
<comment type="catalytic activity">
    <reaction evidence="1">
        <text>(2S)-2-hydroxy-3-oxobutyl phosphate + 5-amino-6-(D-ribitylamino)uracil = 6,7-dimethyl-8-(1-D-ribityl)lumazine + phosphate + 2 H2O + H(+)</text>
        <dbReference type="Rhea" id="RHEA:26152"/>
        <dbReference type="ChEBI" id="CHEBI:15377"/>
        <dbReference type="ChEBI" id="CHEBI:15378"/>
        <dbReference type="ChEBI" id="CHEBI:15934"/>
        <dbReference type="ChEBI" id="CHEBI:43474"/>
        <dbReference type="ChEBI" id="CHEBI:58201"/>
        <dbReference type="ChEBI" id="CHEBI:58830"/>
        <dbReference type="EC" id="2.5.1.78"/>
    </reaction>
</comment>
<comment type="pathway">
    <text evidence="1">Cofactor biosynthesis; riboflavin biosynthesis; riboflavin from 2-hydroxy-3-oxobutyl phosphate and 5-amino-6-(D-ribitylamino)uracil: step 1/2.</text>
</comment>
<comment type="similarity">
    <text evidence="1">Belongs to the DMRL synthase family.</text>
</comment>
<proteinExistence type="inferred from homology"/>
<organism>
    <name type="scientific">Dehalococcoides mccartyi (strain ATCC BAA-2100 / JCM 16839 / KCTC 5957 / BAV1)</name>
    <dbReference type="NCBI Taxonomy" id="216389"/>
    <lineage>
        <taxon>Bacteria</taxon>
        <taxon>Bacillati</taxon>
        <taxon>Chloroflexota</taxon>
        <taxon>Dehalococcoidia</taxon>
        <taxon>Dehalococcoidales</taxon>
        <taxon>Dehalococcoidaceae</taxon>
        <taxon>Dehalococcoides</taxon>
    </lineage>
</organism>
<dbReference type="EC" id="2.5.1.78" evidence="1"/>
<dbReference type="EMBL" id="CP000688">
    <property type="protein sequence ID" value="ABQ17578.1"/>
    <property type="molecule type" value="Genomic_DNA"/>
</dbReference>
<dbReference type="SMR" id="A5FQE3"/>
<dbReference type="KEGG" id="deb:DehaBAV1_0998"/>
<dbReference type="PATRIC" id="fig|216389.18.peg.1053"/>
<dbReference type="HOGENOM" id="CLU_089358_1_1_0"/>
<dbReference type="UniPathway" id="UPA00275">
    <property type="reaction ID" value="UER00404"/>
</dbReference>
<dbReference type="GO" id="GO:0005829">
    <property type="term" value="C:cytosol"/>
    <property type="evidence" value="ECO:0007669"/>
    <property type="project" value="TreeGrafter"/>
</dbReference>
<dbReference type="GO" id="GO:0009349">
    <property type="term" value="C:riboflavin synthase complex"/>
    <property type="evidence" value="ECO:0007669"/>
    <property type="project" value="InterPro"/>
</dbReference>
<dbReference type="GO" id="GO:0000906">
    <property type="term" value="F:6,7-dimethyl-8-ribityllumazine synthase activity"/>
    <property type="evidence" value="ECO:0007669"/>
    <property type="project" value="UniProtKB-UniRule"/>
</dbReference>
<dbReference type="GO" id="GO:0009231">
    <property type="term" value="P:riboflavin biosynthetic process"/>
    <property type="evidence" value="ECO:0007669"/>
    <property type="project" value="UniProtKB-UniRule"/>
</dbReference>
<dbReference type="CDD" id="cd09209">
    <property type="entry name" value="Lumazine_synthase-I"/>
    <property type="match status" value="1"/>
</dbReference>
<dbReference type="FunFam" id="3.40.50.960:FF:000001">
    <property type="entry name" value="6,7-dimethyl-8-ribityllumazine synthase"/>
    <property type="match status" value="1"/>
</dbReference>
<dbReference type="Gene3D" id="3.40.50.960">
    <property type="entry name" value="Lumazine/riboflavin synthase"/>
    <property type="match status" value="1"/>
</dbReference>
<dbReference type="HAMAP" id="MF_00178">
    <property type="entry name" value="Lumazine_synth"/>
    <property type="match status" value="1"/>
</dbReference>
<dbReference type="InterPro" id="IPR034964">
    <property type="entry name" value="LS"/>
</dbReference>
<dbReference type="InterPro" id="IPR002180">
    <property type="entry name" value="LS/RS"/>
</dbReference>
<dbReference type="InterPro" id="IPR036467">
    <property type="entry name" value="LS/RS_sf"/>
</dbReference>
<dbReference type="NCBIfam" id="TIGR00114">
    <property type="entry name" value="lumazine-synth"/>
    <property type="match status" value="1"/>
</dbReference>
<dbReference type="NCBIfam" id="NF000812">
    <property type="entry name" value="PRK00061.1-4"/>
    <property type="match status" value="1"/>
</dbReference>
<dbReference type="PANTHER" id="PTHR21058:SF0">
    <property type="entry name" value="6,7-DIMETHYL-8-RIBITYLLUMAZINE SYNTHASE"/>
    <property type="match status" value="1"/>
</dbReference>
<dbReference type="PANTHER" id="PTHR21058">
    <property type="entry name" value="6,7-DIMETHYL-8-RIBITYLLUMAZINE SYNTHASE DMRL SYNTHASE LUMAZINE SYNTHASE"/>
    <property type="match status" value="1"/>
</dbReference>
<dbReference type="Pfam" id="PF00885">
    <property type="entry name" value="DMRL_synthase"/>
    <property type="match status" value="1"/>
</dbReference>
<dbReference type="SUPFAM" id="SSF52121">
    <property type="entry name" value="Lumazine synthase"/>
    <property type="match status" value="1"/>
</dbReference>
<feature type="chain" id="PRO_1000195475" description="6,7-dimethyl-8-ribityllumazine synthase">
    <location>
        <begin position="1"/>
        <end position="155"/>
    </location>
</feature>
<feature type="active site" description="Proton donor" evidence="1">
    <location>
        <position position="89"/>
    </location>
</feature>
<feature type="binding site" evidence="1">
    <location>
        <position position="23"/>
    </location>
    <ligand>
        <name>5-amino-6-(D-ribitylamino)uracil</name>
        <dbReference type="ChEBI" id="CHEBI:15934"/>
    </ligand>
</feature>
<feature type="binding site" evidence="1">
    <location>
        <begin position="57"/>
        <end position="59"/>
    </location>
    <ligand>
        <name>5-amino-6-(D-ribitylamino)uracil</name>
        <dbReference type="ChEBI" id="CHEBI:15934"/>
    </ligand>
</feature>
<feature type="binding site" evidence="1">
    <location>
        <begin position="81"/>
        <end position="83"/>
    </location>
    <ligand>
        <name>5-amino-6-(D-ribitylamino)uracil</name>
        <dbReference type="ChEBI" id="CHEBI:15934"/>
    </ligand>
</feature>
<feature type="binding site" evidence="1">
    <location>
        <begin position="86"/>
        <end position="87"/>
    </location>
    <ligand>
        <name>(2S)-2-hydroxy-3-oxobutyl phosphate</name>
        <dbReference type="ChEBI" id="CHEBI:58830"/>
    </ligand>
</feature>
<feature type="binding site" evidence="1">
    <location>
        <position position="114"/>
    </location>
    <ligand>
        <name>5-amino-6-(D-ribitylamino)uracil</name>
        <dbReference type="ChEBI" id="CHEBI:15934"/>
    </ligand>
</feature>
<feature type="binding site" evidence="1">
    <location>
        <position position="128"/>
    </location>
    <ligand>
        <name>(2S)-2-hydroxy-3-oxobutyl phosphate</name>
        <dbReference type="ChEBI" id="CHEBI:58830"/>
    </ligand>
</feature>
<reference key="1">
    <citation type="submission" date="2007-05" db="EMBL/GenBank/DDBJ databases">
        <title>Complete sequence of Dehalococcoides sp. BAV1.</title>
        <authorList>
            <consortium name="US DOE Joint Genome Institute"/>
            <person name="Copeland A."/>
            <person name="Lucas S."/>
            <person name="Lapidus A."/>
            <person name="Barry K."/>
            <person name="Detter J.C."/>
            <person name="Glavina del Rio T."/>
            <person name="Hammon N."/>
            <person name="Israni S."/>
            <person name="Pitluck S."/>
            <person name="Lowry S."/>
            <person name="Clum A."/>
            <person name="Schmutz J."/>
            <person name="Larimer F."/>
            <person name="Land M."/>
            <person name="Hauser L."/>
            <person name="Kyrpides N."/>
            <person name="Kim E."/>
            <person name="Ritalahti K.M."/>
            <person name="Loeffler F."/>
            <person name="Richardson P."/>
        </authorList>
    </citation>
    <scope>NUCLEOTIDE SEQUENCE [LARGE SCALE GENOMIC DNA]</scope>
    <source>
        <strain>ATCC BAA-2100 / JCM 16839 / KCTC 5957 / BAV1</strain>
    </source>
</reference>
<name>RISB_DEHMB</name>
<evidence type="ECO:0000255" key="1">
    <source>
        <dbReference type="HAMAP-Rule" id="MF_00178"/>
    </source>
</evidence>